<evidence type="ECO:0000250" key="1"/>
<evidence type="ECO:0000305" key="2"/>
<sequence length="131" mass="14009">MSWQTYVDDHLMCDIDGHRLTAAAIIGHDGSVWAQSSGFPQFKSDEVAAVMKDFDEPGSLAPTGLHLGGTKYMVIQGEPGAVIRGKKGSGGITVKKTGQALIIGIYDEPLTPGQCNMIVERLGDYLLEQGM</sequence>
<protein>
    <recommendedName>
        <fullName>Profilin-5</fullName>
    </recommendedName>
    <alternativeName>
        <fullName>Pollen allergen Hev b 8.0203</fullName>
    </alternativeName>
    <allergenName>Hev b 8.0203</allergenName>
</protein>
<dbReference type="EMBL" id="AF119367">
    <property type="protein sequence ID" value="AAF34343.1"/>
    <property type="molecule type" value="mRNA"/>
</dbReference>
<dbReference type="SMR" id="Q9M7M8"/>
<dbReference type="Allergome" id="397">
    <property type="allergen name" value="Hev b 8"/>
</dbReference>
<dbReference type="Allergome" id="402">
    <property type="allergen name" value="Hev b 8.0203"/>
</dbReference>
<dbReference type="GO" id="GO:0005938">
    <property type="term" value="C:cell cortex"/>
    <property type="evidence" value="ECO:0007669"/>
    <property type="project" value="TreeGrafter"/>
</dbReference>
<dbReference type="GO" id="GO:0005856">
    <property type="term" value="C:cytoskeleton"/>
    <property type="evidence" value="ECO:0007669"/>
    <property type="project" value="UniProtKB-SubCell"/>
</dbReference>
<dbReference type="GO" id="GO:0003785">
    <property type="term" value="F:actin monomer binding"/>
    <property type="evidence" value="ECO:0007669"/>
    <property type="project" value="TreeGrafter"/>
</dbReference>
<dbReference type="CDD" id="cd00148">
    <property type="entry name" value="PROF"/>
    <property type="match status" value="1"/>
</dbReference>
<dbReference type="FunFam" id="3.30.450.30:FF:000001">
    <property type="entry name" value="Profilin"/>
    <property type="match status" value="1"/>
</dbReference>
<dbReference type="Gene3D" id="3.30.450.30">
    <property type="entry name" value="Dynein light chain 2a, cytoplasmic"/>
    <property type="match status" value="1"/>
</dbReference>
<dbReference type="InterPro" id="IPR048278">
    <property type="entry name" value="PFN"/>
</dbReference>
<dbReference type="InterPro" id="IPR005455">
    <property type="entry name" value="PFN_euk"/>
</dbReference>
<dbReference type="InterPro" id="IPR036140">
    <property type="entry name" value="PFN_sf"/>
</dbReference>
<dbReference type="InterPro" id="IPR027310">
    <property type="entry name" value="Profilin_CS"/>
</dbReference>
<dbReference type="PANTHER" id="PTHR11604">
    <property type="entry name" value="PROFILIN"/>
    <property type="match status" value="1"/>
</dbReference>
<dbReference type="PANTHER" id="PTHR11604:SF35">
    <property type="entry name" value="PROFILIN-3"/>
    <property type="match status" value="1"/>
</dbReference>
<dbReference type="Pfam" id="PF00235">
    <property type="entry name" value="Profilin"/>
    <property type="match status" value="1"/>
</dbReference>
<dbReference type="PRINTS" id="PR00392">
    <property type="entry name" value="PROFILIN"/>
</dbReference>
<dbReference type="PRINTS" id="PR01640">
    <property type="entry name" value="PROFILINPLNT"/>
</dbReference>
<dbReference type="SMART" id="SM00392">
    <property type="entry name" value="PROF"/>
    <property type="match status" value="1"/>
</dbReference>
<dbReference type="SUPFAM" id="SSF55770">
    <property type="entry name" value="Profilin (actin-binding protein)"/>
    <property type="match status" value="1"/>
</dbReference>
<dbReference type="PROSITE" id="PS00414">
    <property type="entry name" value="PROFILIN"/>
    <property type="match status" value="1"/>
</dbReference>
<proteinExistence type="evidence at protein level"/>
<name>PROF5_HEVBR</name>
<keyword id="KW-0009">Actin-binding</keyword>
<keyword id="KW-0020">Allergen</keyword>
<keyword id="KW-0963">Cytoplasm</keyword>
<keyword id="KW-0206">Cytoskeleton</keyword>
<organism>
    <name type="scientific">Hevea brasiliensis</name>
    <name type="common">Para rubber tree</name>
    <name type="synonym">Siphonia brasiliensis</name>
    <dbReference type="NCBI Taxonomy" id="3981"/>
    <lineage>
        <taxon>Eukaryota</taxon>
        <taxon>Viridiplantae</taxon>
        <taxon>Streptophyta</taxon>
        <taxon>Embryophyta</taxon>
        <taxon>Tracheophyta</taxon>
        <taxon>Spermatophyta</taxon>
        <taxon>Magnoliopsida</taxon>
        <taxon>eudicotyledons</taxon>
        <taxon>Gunneridae</taxon>
        <taxon>Pentapetalae</taxon>
        <taxon>rosids</taxon>
        <taxon>fabids</taxon>
        <taxon>Malpighiales</taxon>
        <taxon>Euphorbiaceae</taxon>
        <taxon>Crotonoideae</taxon>
        <taxon>Micrandreae</taxon>
        <taxon>Hevea</taxon>
    </lineage>
</organism>
<comment type="function">
    <text evidence="1">Binds to actin and affects the structure of the cytoskeleton. At high concentrations, profilin prevents the polymerization of actin, whereas it enhances it at low concentrations. By binding to PIP2, it inhibits the formation of IP3 and DG (By similarity).</text>
</comment>
<comment type="subunit">
    <text>Occurs in many kinds of cells as a complex with monomeric actin in a 1:1 ratio.</text>
</comment>
<comment type="subcellular location">
    <subcellularLocation>
        <location evidence="1">Cytoplasm</location>
        <location evidence="1">Cytoskeleton</location>
    </subcellularLocation>
</comment>
<comment type="allergen">
    <text>Causes an allergic reaction in human. Involved in latex allergic reactions.</text>
</comment>
<comment type="similarity">
    <text evidence="2">Belongs to the profilin family.</text>
</comment>
<feature type="initiator methionine" description="Removed" evidence="1">
    <location>
        <position position="1"/>
    </location>
</feature>
<feature type="chain" id="PRO_0000199637" description="Profilin-5">
    <location>
        <begin position="2"/>
        <end position="131"/>
    </location>
</feature>
<reference key="1">
    <citation type="submission" date="1999-01" db="EMBL/GenBank/DDBJ databases">
        <title>Characterization of new isoforms of the latex allergen, Hev b 8.</title>
        <authorList>
            <person name="Beezhold D.H."/>
            <person name="Hickey V.L."/>
            <person name="Kostyal D.A."/>
            <person name="Sussman G.L."/>
        </authorList>
    </citation>
    <scope>NUCLEOTIDE SEQUENCE [MRNA]</scope>
</reference>
<accession>Q9M7M8</accession>